<evidence type="ECO:0000255" key="1">
    <source>
        <dbReference type="HAMAP-Rule" id="MF_01374"/>
    </source>
</evidence>
<organism>
    <name type="scientific">Shigella boydii serotype 4 (strain Sb227)</name>
    <dbReference type="NCBI Taxonomy" id="300268"/>
    <lineage>
        <taxon>Bacteria</taxon>
        <taxon>Pseudomonadati</taxon>
        <taxon>Pseudomonadota</taxon>
        <taxon>Gammaproteobacteria</taxon>
        <taxon>Enterobacterales</taxon>
        <taxon>Enterobacteriaceae</taxon>
        <taxon>Shigella</taxon>
    </lineage>
</organism>
<name>GLO2_SHIBS</name>
<keyword id="KW-0378">Hydrolase</keyword>
<keyword id="KW-0479">Metal-binding</keyword>
<keyword id="KW-0862">Zinc</keyword>
<comment type="function">
    <text evidence="1">Thiolesterase that catalyzes the hydrolysis of S-D-lactoyl-glutathione to form glutathione and D-lactic acid.</text>
</comment>
<comment type="catalytic activity">
    <reaction evidence="1">
        <text>an S-(2-hydroxyacyl)glutathione + H2O = a 2-hydroxy carboxylate + glutathione + H(+)</text>
        <dbReference type="Rhea" id="RHEA:21864"/>
        <dbReference type="ChEBI" id="CHEBI:15377"/>
        <dbReference type="ChEBI" id="CHEBI:15378"/>
        <dbReference type="ChEBI" id="CHEBI:57925"/>
        <dbReference type="ChEBI" id="CHEBI:58896"/>
        <dbReference type="ChEBI" id="CHEBI:71261"/>
        <dbReference type="EC" id="3.1.2.6"/>
    </reaction>
</comment>
<comment type="cofactor">
    <cofactor evidence="1">
        <name>Zn(2+)</name>
        <dbReference type="ChEBI" id="CHEBI:29105"/>
    </cofactor>
    <text evidence="1">Binds 2 Zn(2+) ions per subunit.</text>
</comment>
<comment type="pathway">
    <text evidence="1">Secondary metabolite metabolism; methylglyoxal degradation; (R)-lactate from methylglyoxal: step 2/2.</text>
</comment>
<comment type="subunit">
    <text evidence="1">Monomer.</text>
</comment>
<comment type="similarity">
    <text evidence="1">Belongs to the metallo-beta-lactamase superfamily. Glyoxalase II family.</text>
</comment>
<reference key="1">
    <citation type="journal article" date="2005" name="Nucleic Acids Res.">
        <title>Genome dynamics and diversity of Shigella species, the etiologic agents of bacillary dysentery.</title>
        <authorList>
            <person name="Yang F."/>
            <person name="Yang J."/>
            <person name="Zhang X."/>
            <person name="Chen L."/>
            <person name="Jiang Y."/>
            <person name="Yan Y."/>
            <person name="Tang X."/>
            <person name="Wang J."/>
            <person name="Xiong Z."/>
            <person name="Dong J."/>
            <person name="Xue Y."/>
            <person name="Zhu Y."/>
            <person name="Xu X."/>
            <person name="Sun L."/>
            <person name="Chen S."/>
            <person name="Nie H."/>
            <person name="Peng J."/>
            <person name="Xu J."/>
            <person name="Wang Y."/>
            <person name="Yuan Z."/>
            <person name="Wen Y."/>
            <person name="Yao Z."/>
            <person name="Shen Y."/>
            <person name="Qiang B."/>
            <person name="Hou Y."/>
            <person name="Yu J."/>
            <person name="Jin Q."/>
        </authorList>
    </citation>
    <scope>NUCLEOTIDE SEQUENCE [LARGE SCALE GENOMIC DNA]</scope>
    <source>
        <strain>Sb227</strain>
    </source>
</reference>
<protein>
    <recommendedName>
        <fullName evidence="1">Hydroxyacylglutathione hydrolase</fullName>
        <ecNumber evidence="1">3.1.2.6</ecNumber>
    </recommendedName>
    <alternativeName>
        <fullName evidence="1">Glyoxalase II</fullName>
        <shortName evidence="1">Glx II</shortName>
    </alternativeName>
</protein>
<accession>Q325T4</accession>
<sequence length="251" mass="28512">MNLNSIPAFDDNYIWVLNDEAGRCLIVDPGDAEPVLNAITANNWQPEAIFLTHHHHDHVGGVKELVEKFPQIVVYGPQETQDKGTTQVVKDGETAFVLGHEFSVITTPGHTLGHICYFSKPYLFCGDTLFSGGCGRLFEGTALQMYQSLKKLSALPDDTLVCCAHEYTLSNMKFALSIFPHDLSINDYYRKVKELRAKNQITLPVILKNERQINVFLRTEDIDLINGINEETLLQQPEERFAWLRSKKDRF</sequence>
<dbReference type="EC" id="3.1.2.6" evidence="1"/>
<dbReference type="EMBL" id="CP000036">
    <property type="protein sequence ID" value="ABB64924.1"/>
    <property type="molecule type" value="Genomic_DNA"/>
</dbReference>
<dbReference type="RefSeq" id="WP_001052754.1">
    <property type="nucleotide sequence ID" value="NC_007613.1"/>
</dbReference>
<dbReference type="SMR" id="Q325T4"/>
<dbReference type="KEGG" id="sbo:SBO_0201"/>
<dbReference type="HOGENOM" id="CLU_030571_4_1_6"/>
<dbReference type="UniPathway" id="UPA00619">
    <property type="reaction ID" value="UER00676"/>
</dbReference>
<dbReference type="Proteomes" id="UP000007067">
    <property type="component" value="Chromosome"/>
</dbReference>
<dbReference type="GO" id="GO:0004416">
    <property type="term" value="F:hydroxyacylglutathione hydrolase activity"/>
    <property type="evidence" value="ECO:0007669"/>
    <property type="project" value="UniProtKB-UniRule"/>
</dbReference>
<dbReference type="GO" id="GO:0046872">
    <property type="term" value="F:metal ion binding"/>
    <property type="evidence" value="ECO:0007669"/>
    <property type="project" value="UniProtKB-KW"/>
</dbReference>
<dbReference type="GO" id="GO:0019243">
    <property type="term" value="P:methylglyoxal catabolic process to D-lactate via S-lactoyl-glutathione"/>
    <property type="evidence" value="ECO:0007669"/>
    <property type="project" value="InterPro"/>
</dbReference>
<dbReference type="CDD" id="cd07723">
    <property type="entry name" value="hydroxyacylglutathione_hydrolase_MBL-fold"/>
    <property type="match status" value="1"/>
</dbReference>
<dbReference type="Gene3D" id="3.60.15.10">
    <property type="entry name" value="Ribonuclease Z/Hydroxyacylglutathione hydrolase-like"/>
    <property type="match status" value="1"/>
</dbReference>
<dbReference type="HAMAP" id="MF_01374">
    <property type="entry name" value="Glyoxalase_2"/>
    <property type="match status" value="1"/>
</dbReference>
<dbReference type="InterPro" id="IPR035680">
    <property type="entry name" value="Clx_II_MBL"/>
</dbReference>
<dbReference type="InterPro" id="IPR050110">
    <property type="entry name" value="Glyoxalase_II_hydrolase"/>
</dbReference>
<dbReference type="InterPro" id="IPR032282">
    <property type="entry name" value="HAGH_C"/>
</dbReference>
<dbReference type="InterPro" id="IPR017782">
    <property type="entry name" value="Hydroxyacylglutathione_Hdrlase"/>
</dbReference>
<dbReference type="InterPro" id="IPR001279">
    <property type="entry name" value="Metallo-B-lactamas"/>
</dbReference>
<dbReference type="InterPro" id="IPR036866">
    <property type="entry name" value="RibonucZ/Hydroxyglut_hydro"/>
</dbReference>
<dbReference type="NCBIfam" id="TIGR03413">
    <property type="entry name" value="GSH_gloB"/>
    <property type="match status" value="1"/>
</dbReference>
<dbReference type="NCBIfam" id="NF007597">
    <property type="entry name" value="PRK10241.1"/>
    <property type="match status" value="1"/>
</dbReference>
<dbReference type="PANTHER" id="PTHR43705">
    <property type="entry name" value="HYDROXYACYLGLUTATHIONE HYDROLASE"/>
    <property type="match status" value="1"/>
</dbReference>
<dbReference type="PANTHER" id="PTHR43705:SF1">
    <property type="entry name" value="HYDROXYACYLGLUTATHIONE HYDROLASE GLOB"/>
    <property type="match status" value="1"/>
</dbReference>
<dbReference type="Pfam" id="PF16123">
    <property type="entry name" value="HAGH_C"/>
    <property type="match status" value="1"/>
</dbReference>
<dbReference type="Pfam" id="PF00753">
    <property type="entry name" value="Lactamase_B"/>
    <property type="match status" value="1"/>
</dbReference>
<dbReference type="PIRSF" id="PIRSF005457">
    <property type="entry name" value="Glx"/>
    <property type="match status" value="1"/>
</dbReference>
<dbReference type="SMART" id="SM00849">
    <property type="entry name" value="Lactamase_B"/>
    <property type="match status" value="1"/>
</dbReference>
<dbReference type="SUPFAM" id="SSF56281">
    <property type="entry name" value="Metallo-hydrolase/oxidoreductase"/>
    <property type="match status" value="1"/>
</dbReference>
<gene>
    <name evidence="1" type="primary">gloB</name>
    <name type="ordered locus">SBO_0201</name>
</gene>
<feature type="chain" id="PRO_0000309705" description="Hydroxyacylglutathione hydrolase">
    <location>
        <begin position="1"/>
        <end position="251"/>
    </location>
</feature>
<feature type="binding site" evidence="1">
    <location>
        <position position="53"/>
    </location>
    <ligand>
        <name>Zn(2+)</name>
        <dbReference type="ChEBI" id="CHEBI:29105"/>
        <label>1</label>
    </ligand>
</feature>
<feature type="binding site" evidence="1">
    <location>
        <position position="55"/>
    </location>
    <ligand>
        <name>Zn(2+)</name>
        <dbReference type="ChEBI" id="CHEBI:29105"/>
        <label>1</label>
    </ligand>
</feature>
<feature type="binding site" evidence="1">
    <location>
        <position position="57"/>
    </location>
    <ligand>
        <name>Zn(2+)</name>
        <dbReference type="ChEBI" id="CHEBI:29105"/>
        <label>2</label>
    </ligand>
</feature>
<feature type="binding site" evidence="1">
    <location>
        <position position="58"/>
    </location>
    <ligand>
        <name>Zn(2+)</name>
        <dbReference type="ChEBI" id="CHEBI:29105"/>
        <label>2</label>
    </ligand>
</feature>
<feature type="binding site" evidence="1">
    <location>
        <position position="110"/>
    </location>
    <ligand>
        <name>Zn(2+)</name>
        <dbReference type="ChEBI" id="CHEBI:29105"/>
        <label>1</label>
    </ligand>
</feature>
<feature type="binding site" evidence="1">
    <location>
        <position position="127"/>
    </location>
    <ligand>
        <name>Zn(2+)</name>
        <dbReference type="ChEBI" id="CHEBI:29105"/>
        <label>1</label>
    </ligand>
</feature>
<feature type="binding site" evidence="1">
    <location>
        <position position="127"/>
    </location>
    <ligand>
        <name>Zn(2+)</name>
        <dbReference type="ChEBI" id="CHEBI:29105"/>
        <label>2</label>
    </ligand>
</feature>
<feature type="binding site" evidence="1">
    <location>
        <position position="165"/>
    </location>
    <ligand>
        <name>Zn(2+)</name>
        <dbReference type="ChEBI" id="CHEBI:29105"/>
        <label>2</label>
    </ligand>
</feature>
<proteinExistence type="inferred from homology"/>